<name>ISPE_SYNJB</name>
<organism>
    <name type="scientific">Synechococcus sp. (strain JA-2-3B'a(2-13))</name>
    <name type="common">Cyanobacteria bacterium Yellowstone B-Prime</name>
    <dbReference type="NCBI Taxonomy" id="321332"/>
    <lineage>
        <taxon>Bacteria</taxon>
        <taxon>Bacillati</taxon>
        <taxon>Cyanobacteriota</taxon>
        <taxon>Cyanophyceae</taxon>
        <taxon>Synechococcales</taxon>
        <taxon>Synechococcaceae</taxon>
        <taxon>Synechococcus</taxon>
    </lineage>
</organism>
<feature type="chain" id="PRO_0000235142" description="4-diphosphocytidyl-2-C-methyl-D-erythritol kinase">
    <location>
        <begin position="1"/>
        <end position="311"/>
    </location>
</feature>
<feature type="active site" evidence="1">
    <location>
        <position position="11"/>
    </location>
</feature>
<feature type="active site" evidence="1">
    <location>
        <position position="136"/>
    </location>
</feature>
<feature type="binding site" evidence="1">
    <location>
        <begin position="94"/>
        <end position="104"/>
    </location>
    <ligand>
        <name>ATP</name>
        <dbReference type="ChEBI" id="CHEBI:30616"/>
    </ligand>
</feature>
<keyword id="KW-0067">ATP-binding</keyword>
<keyword id="KW-0414">Isoprene biosynthesis</keyword>
<keyword id="KW-0418">Kinase</keyword>
<keyword id="KW-0547">Nucleotide-binding</keyword>
<keyword id="KW-1185">Reference proteome</keyword>
<keyword id="KW-0808">Transferase</keyword>
<protein>
    <recommendedName>
        <fullName evidence="1">4-diphosphocytidyl-2-C-methyl-D-erythritol kinase</fullName>
        <shortName evidence="1">CMK</shortName>
        <ecNumber evidence="1">2.7.1.148</ecNumber>
    </recommendedName>
    <alternativeName>
        <fullName evidence="1">4-(cytidine-5'-diphospho)-2-C-methyl-D-erythritol kinase</fullName>
    </alternativeName>
</protein>
<reference key="1">
    <citation type="journal article" date="2007" name="ISME J.">
        <title>Population level functional diversity in a microbial community revealed by comparative genomic and metagenomic analyses.</title>
        <authorList>
            <person name="Bhaya D."/>
            <person name="Grossman A.R."/>
            <person name="Steunou A.-S."/>
            <person name="Khuri N."/>
            <person name="Cohan F.M."/>
            <person name="Hamamura N."/>
            <person name="Melendrez M.C."/>
            <person name="Bateson M.M."/>
            <person name="Ward D.M."/>
            <person name="Heidelberg J.F."/>
        </authorList>
    </citation>
    <scope>NUCLEOTIDE SEQUENCE [LARGE SCALE GENOMIC DNA]</scope>
    <source>
        <strain>JA-2-3B'a(2-13)</strain>
    </source>
</reference>
<sequence>MQACTLIARAKINLYLEILGSRPDGYSEVAMVLQSIHLADRLQLKSRPHGIHLTCDRPEVPTDARNLAYQAAELLQKECHSAAGVEIHIEKHIPVAAGLAGGSADAAAVLVGLNQLWGLGLTVGELQSLAARLGSDIPFCIQGGTQLATGRGEVLEPLADWEGIPVLLAKPKHLGVSTAWAYQAFRSRREILGATAPSEPALPTLPQALAALSRQDPPALARSLRNDLEQVVLPEYAIVGELRQALLSAGALGSLMSGSGPTVFGIMPSLELAAQARDTLRRQFQDVEFWVTQFAPTGILLQPDPCSLSPS</sequence>
<evidence type="ECO:0000255" key="1">
    <source>
        <dbReference type="HAMAP-Rule" id="MF_00061"/>
    </source>
</evidence>
<dbReference type="EC" id="2.7.1.148" evidence="1"/>
<dbReference type="EMBL" id="CP000240">
    <property type="protein sequence ID" value="ABD02358.1"/>
    <property type="molecule type" value="Genomic_DNA"/>
</dbReference>
<dbReference type="RefSeq" id="WP_011433006.1">
    <property type="nucleotide sequence ID" value="NC_007776.1"/>
</dbReference>
<dbReference type="SMR" id="Q2JLP6"/>
<dbReference type="STRING" id="321332.CYB_1390"/>
<dbReference type="KEGG" id="cyb:CYB_1390"/>
<dbReference type="eggNOG" id="COG1947">
    <property type="taxonomic scope" value="Bacteria"/>
</dbReference>
<dbReference type="HOGENOM" id="CLU_053057_1_1_3"/>
<dbReference type="OrthoDB" id="9809438at2"/>
<dbReference type="UniPathway" id="UPA00056">
    <property type="reaction ID" value="UER00094"/>
</dbReference>
<dbReference type="Proteomes" id="UP000001938">
    <property type="component" value="Chromosome"/>
</dbReference>
<dbReference type="GO" id="GO:0050515">
    <property type="term" value="F:4-(cytidine 5'-diphospho)-2-C-methyl-D-erythritol kinase activity"/>
    <property type="evidence" value="ECO:0007669"/>
    <property type="project" value="UniProtKB-UniRule"/>
</dbReference>
<dbReference type="GO" id="GO:0005524">
    <property type="term" value="F:ATP binding"/>
    <property type="evidence" value="ECO:0007669"/>
    <property type="project" value="UniProtKB-UniRule"/>
</dbReference>
<dbReference type="GO" id="GO:0019288">
    <property type="term" value="P:isopentenyl diphosphate biosynthetic process, methylerythritol 4-phosphate pathway"/>
    <property type="evidence" value="ECO:0007669"/>
    <property type="project" value="UniProtKB-UniRule"/>
</dbReference>
<dbReference type="GO" id="GO:0016114">
    <property type="term" value="P:terpenoid biosynthetic process"/>
    <property type="evidence" value="ECO:0007669"/>
    <property type="project" value="InterPro"/>
</dbReference>
<dbReference type="Gene3D" id="3.30.230.10">
    <property type="match status" value="1"/>
</dbReference>
<dbReference type="Gene3D" id="3.30.70.890">
    <property type="entry name" value="GHMP kinase, C-terminal domain"/>
    <property type="match status" value="1"/>
</dbReference>
<dbReference type="HAMAP" id="MF_00061">
    <property type="entry name" value="IspE"/>
    <property type="match status" value="1"/>
</dbReference>
<dbReference type="InterPro" id="IPR013750">
    <property type="entry name" value="GHMP_kinase_C_dom"/>
</dbReference>
<dbReference type="InterPro" id="IPR036554">
    <property type="entry name" value="GHMP_kinase_C_sf"/>
</dbReference>
<dbReference type="InterPro" id="IPR006204">
    <property type="entry name" value="GHMP_kinase_N_dom"/>
</dbReference>
<dbReference type="InterPro" id="IPR004424">
    <property type="entry name" value="IspE"/>
</dbReference>
<dbReference type="InterPro" id="IPR020568">
    <property type="entry name" value="Ribosomal_Su5_D2-typ_SF"/>
</dbReference>
<dbReference type="InterPro" id="IPR014721">
    <property type="entry name" value="Ribsml_uS5_D2-typ_fold_subgr"/>
</dbReference>
<dbReference type="NCBIfam" id="TIGR00154">
    <property type="entry name" value="ispE"/>
    <property type="match status" value="1"/>
</dbReference>
<dbReference type="PANTHER" id="PTHR43527">
    <property type="entry name" value="4-DIPHOSPHOCYTIDYL-2-C-METHYL-D-ERYTHRITOL KINASE, CHLOROPLASTIC"/>
    <property type="match status" value="1"/>
</dbReference>
<dbReference type="PANTHER" id="PTHR43527:SF2">
    <property type="entry name" value="4-DIPHOSPHOCYTIDYL-2-C-METHYL-D-ERYTHRITOL KINASE, CHLOROPLASTIC"/>
    <property type="match status" value="1"/>
</dbReference>
<dbReference type="Pfam" id="PF08544">
    <property type="entry name" value="GHMP_kinases_C"/>
    <property type="match status" value="1"/>
</dbReference>
<dbReference type="Pfam" id="PF00288">
    <property type="entry name" value="GHMP_kinases_N"/>
    <property type="match status" value="1"/>
</dbReference>
<dbReference type="PIRSF" id="PIRSF010376">
    <property type="entry name" value="IspE"/>
    <property type="match status" value="1"/>
</dbReference>
<dbReference type="SUPFAM" id="SSF55060">
    <property type="entry name" value="GHMP Kinase, C-terminal domain"/>
    <property type="match status" value="1"/>
</dbReference>
<dbReference type="SUPFAM" id="SSF54211">
    <property type="entry name" value="Ribosomal protein S5 domain 2-like"/>
    <property type="match status" value="1"/>
</dbReference>
<gene>
    <name evidence="1" type="primary">ispE</name>
    <name type="ordered locus">CYB_1390</name>
</gene>
<accession>Q2JLP6</accession>
<comment type="function">
    <text evidence="1">Catalyzes the phosphorylation of the position 2 hydroxy group of 4-diphosphocytidyl-2C-methyl-D-erythritol.</text>
</comment>
<comment type="catalytic activity">
    <reaction evidence="1">
        <text>4-CDP-2-C-methyl-D-erythritol + ATP = 4-CDP-2-C-methyl-D-erythritol 2-phosphate + ADP + H(+)</text>
        <dbReference type="Rhea" id="RHEA:18437"/>
        <dbReference type="ChEBI" id="CHEBI:15378"/>
        <dbReference type="ChEBI" id="CHEBI:30616"/>
        <dbReference type="ChEBI" id="CHEBI:57823"/>
        <dbReference type="ChEBI" id="CHEBI:57919"/>
        <dbReference type="ChEBI" id="CHEBI:456216"/>
        <dbReference type="EC" id="2.7.1.148"/>
    </reaction>
</comment>
<comment type="pathway">
    <text evidence="1">Isoprenoid biosynthesis; isopentenyl diphosphate biosynthesis via DXP pathway; isopentenyl diphosphate from 1-deoxy-D-xylulose 5-phosphate: step 3/6.</text>
</comment>
<comment type="similarity">
    <text evidence="1">Belongs to the GHMP kinase family. IspE subfamily.</text>
</comment>
<proteinExistence type="inferred from homology"/>